<gene>
    <name evidence="2" type="primary">GPC</name>
    <name type="synonym">GP-C</name>
</gene>
<name>GLYC_GTOVV</name>
<sequence>MGQLISFFQDIPIFFEEALNVALAVVTLLAIIKGIVNVWKSGILQLFVFLVLAGRSCSFKVGHHTNFESFTVKLGGVFHELPSLCRVNNSYSLIRLSHNSNQALSVEYVDVHPVLCSSSPTILDNYTQCIKGSPEFDWILGWTIKGLGHDFLRDPRICCEPKKTTNAEFTFQLNLTDSPETHHYRSKIEVGIRHLFGNYITNDSYSKMSVVMRNTTWEGQCSNSHVNTLRFLVKNAGYLVGRKPLAFFSWSLSDPKGNDMPGGYCLERWMLVAGDLKCFGNTAVAKCNLNHDSEFCDMLRLFDFNKNAIEKLNNQTKTAVNMLTHSINSLISDNLLMRNKLKEILKVPYCNYTRFWYINHTKSGEHSLPRCWLVSNGSYLNESDFRNEWILESDHLIAEMLSKEYQDRQGKTPLTLVDLCFWSAIFFTTSLFLHLVGFPTHRHIQGDPCPLPHRLDRNGACRCGRFQKLGKQVTWKRKH</sequence>
<proteinExistence type="evidence at protein level"/>
<feature type="initiator methionine" description="Removed; by host" evidence="2">
    <location>
        <position position="1"/>
    </location>
</feature>
<feature type="chain" id="PRO_0000361588" description="Pre-glycoprotein polyprotein GP complex" evidence="2">
    <location>
        <begin position="2"/>
        <end position="479"/>
    </location>
</feature>
<feature type="chain" id="PRO_0000361589" description="Stable signal peptide" evidence="2">
    <location>
        <begin position="2"/>
        <end position="58"/>
    </location>
</feature>
<feature type="chain" id="PRO_0000361590" description="Glycoprotein G1" evidence="2">
    <location>
        <begin position="59"/>
        <end position="245"/>
    </location>
</feature>
<feature type="chain" id="PRO_0000361591" description="Glycoprotein G2" evidence="2">
    <location>
        <begin position="246"/>
        <end position="479"/>
    </location>
</feature>
<feature type="topological domain" description="Extracellular" evidence="2">
    <location>
        <begin position="2"/>
        <end position="17"/>
    </location>
</feature>
<feature type="transmembrane region" description="Helical" evidence="2">
    <location>
        <begin position="18"/>
        <end position="32"/>
    </location>
</feature>
<feature type="topological domain" description="Cytoplasmic" evidence="2">
    <location>
        <position position="33"/>
    </location>
</feature>
<feature type="transmembrane region" description="Helical" evidence="2">
    <location>
        <begin position="34"/>
        <end position="53"/>
    </location>
</feature>
<feature type="topological domain" description="Extracellular" evidence="2">
    <location>
        <begin position="54"/>
        <end position="58"/>
    </location>
</feature>
<feature type="topological domain" description="Extracellular" evidence="2">
    <location>
        <begin position="59"/>
        <end position="418"/>
    </location>
</feature>
<feature type="transmembrane region" description="Helical" evidence="2">
    <location>
        <begin position="419"/>
        <end position="439"/>
    </location>
</feature>
<feature type="topological domain" description="Cytoplasmic" evidence="2">
    <location>
        <begin position="440"/>
        <end position="479"/>
    </location>
</feature>
<feature type="binding site" evidence="2">
    <location>
        <position position="57"/>
    </location>
    <ligand>
        <name>Zn(2+)</name>
        <dbReference type="ChEBI" id="CHEBI:29105"/>
        <label>1</label>
    </ligand>
</feature>
<feature type="binding site" evidence="2">
    <location>
        <position position="441"/>
    </location>
    <ligand>
        <name>Zn(2+)</name>
        <dbReference type="ChEBI" id="CHEBI:29105"/>
        <label>2</label>
    </ligand>
</feature>
<feature type="binding site" evidence="2">
    <location>
        <position position="443"/>
    </location>
    <ligand>
        <name>Zn(2+)</name>
        <dbReference type="ChEBI" id="CHEBI:29105"/>
        <label>2</label>
    </ligand>
</feature>
<feature type="binding site" evidence="2">
    <location>
        <position position="449"/>
    </location>
    <ligand>
        <name>Zn(2+)</name>
        <dbReference type="ChEBI" id="CHEBI:29105"/>
        <label>2</label>
    </ligand>
</feature>
<feature type="binding site" evidence="2">
    <location>
        <position position="453"/>
    </location>
    <ligand>
        <name>Zn(2+)</name>
        <dbReference type="ChEBI" id="CHEBI:29105"/>
        <label>1</label>
    </ligand>
</feature>
<feature type="binding site" evidence="2">
    <location>
        <position position="461"/>
    </location>
    <ligand>
        <name>Zn(2+)</name>
        <dbReference type="ChEBI" id="CHEBI:29105"/>
        <label>1</label>
    </ligand>
</feature>
<feature type="binding site" evidence="2">
    <location>
        <position position="463"/>
    </location>
    <ligand>
        <name>Zn(2+)</name>
        <dbReference type="ChEBI" id="CHEBI:29105"/>
        <label>1</label>
    </ligand>
</feature>
<feature type="binding site" evidence="2">
    <location>
        <position position="479"/>
    </location>
    <ligand>
        <name>Zn(2+)</name>
        <dbReference type="ChEBI" id="CHEBI:29105"/>
        <label>2</label>
    </ligand>
</feature>
<feature type="site" description="Important for GP-C-mediated membrane fusion" evidence="1">
    <location>
        <position position="33"/>
    </location>
</feature>
<feature type="site" description="Cleavage; by host signal peptidase" evidence="2">
    <location>
        <begin position="58"/>
        <end position="59"/>
    </location>
</feature>
<feature type="site" description="Cleavage; by host MBTPS1" evidence="2">
    <location>
        <begin position="245"/>
        <end position="246"/>
    </location>
</feature>
<feature type="lipid moiety-binding region" description="N-myristoyl glycine; by host" evidence="2">
    <location>
        <position position="2"/>
    </location>
</feature>
<feature type="glycosylation site" description="N-linked (GlcNAc...) asparagine; by host" evidence="2">
    <location>
        <position position="88"/>
    </location>
</feature>
<feature type="glycosylation site" description="N-linked (GlcNAc...) asparagine; by host" evidence="2">
    <location>
        <position position="125"/>
    </location>
</feature>
<feature type="glycosylation site" description="N-linked (GlcNAc...) asparagine; by host" evidence="2">
    <location>
        <position position="174"/>
    </location>
</feature>
<feature type="glycosylation site" description="N-linked (GlcNAc...) asparagine; by host" evidence="2">
    <location>
        <position position="202"/>
    </location>
</feature>
<feature type="glycosylation site" description="N-linked (GlcNAc...) asparagine; by host" evidence="2">
    <location>
        <position position="214"/>
    </location>
</feature>
<feature type="glycosylation site" description="N-linked (GlcNAc...) asparagine; by host" evidence="2 4">
    <location>
        <position position="314"/>
    </location>
</feature>
<feature type="glycosylation site" description="N-linked (GlcNAc...) asparagine; by host" evidence="2 4">
    <location>
        <position position="351"/>
    </location>
</feature>
<feature type="glycosylation site" description="N-linked (GlcNAc...) asparagine; by host" evidence="2">
    <location>
        <position position="359"/>
    </location>
</feature>
<feature type="glycosylation site" description="N-linked (GlcNAc...) asparagine; by host" evidence="2 4">
    <location>
        <position position="376"/>
    </location>
</feature>
<feature type="glycosylation site" description="N-linked (GlcNAc...) asparagine; by host" evidence="2 4">
    <location>
        <position position="381"/>
    </location>
</feature>
<feature type="disulfide bond" evidence="2">
    <location>
        <begin position="85"/>
        <end position="221"/>
    </location>
</feature>
<feature type="disulfide bond" evidence="2">
    <location>
        <begin position="265"/>
        <end position="278"/>
    </location>
</feature>
<feature type="disulfide bond" evidence="2">
    <location>
        <begin position="287"/>
        <end position="296"/>
    </location>
</feature>
<feature type="disulfide bond" evidence="2 4">
    <location>
        <begin position="350"/>
        <end position="371"/>
    </location>
</feature>
<organismHost>
    <name type="scientific">Homo sapiens</name>
    <name type="common">Human</name>
    <dbReference type="NCBI Taxonomy" id="9606"/>
</organismHost>
<organismHost>
    <name type="scientific">Zygodontomys brevicauda</name>
    <dbReference type="NCBI Taxonomy" id="157541"/>
</organismHost>
<evidence type="ECO:0000250" key="1">
    <source>
        <dbReference type="UniProtKB" id="P26313"/>
    </source>
</evidence>
<evidence type="ECO:0000255" key="2">
    <source>
        <dbReference type="HAMAP-Rule" id="MF_04084"/>
    </source>
</evidence>
<evidence type="ECO:0000269" key="3">
    <source>
    </source>
</evidence>
<evidence type="ECO:0000269" key="4">
    <source>
    </source>
</evidence>
<organism>
    <name type="scientific">Guanarito mammarenavirus (isolate Human/Venezuela/NH-95551/1990)</name>
    <name type="common">GTOV</name>
    <dbReference type="NCBI Taxonomy" id="3052307"/>
    <lineage>
        <taxon>Viruses</taxon>
        <taxon>Riboviria</taxon>
        <taxon>Orthornavirae</taxon>
        <taxon>Negarnaviricota</taxon>
        <taxon>Polyploviricotina</taxon>
        <taxon>Ellioviricetes</taxon>
        <taxon>Bunyavirales</taxon>
        <taxon>Arenaviridae</taxon>
        <taxon>Mammarenavirus</taxon>
    </lineage>
</organism>
<accession>Q8AYW1</accession>
<reference key="1">
    <citation type="journal article" date="2002" name="Biochem. Biophys. Res. Commun.">
        <title>Phylogeny of New World arenaviruses based on the complete coding sequences of the small genomic segment identified an evolutionary lineage produced by intrasegmental recombination.</title>
        <authorList>
            <person name="Charrel R.N."/>
            <person name="Feldmann H."/>
            <person name="Fulhorst C.F."/>
            <person name="Khelifa R."/>
            <person name="de Chesse R."/>
            <person name="de Lamballerie X."/>
        </authorList>
    </citation>
    <scope>NUCLEOTIDE SEQUENCE [GENOMIC RNA]</scope>
</reference>
<reference key="2">
    <citation type="submission" date="2002-07" db="EMBL/GenBank/DDBJ databases">
        <authorList>
            <person name="Charrel R.N."/>
            <person name="Feldmann H."/>
            <person name="Khelifa R."/>
            <person name="de Lamballerie X."/>
        </authorList>
    </citation>
    <scope>NUCLEOTIDE SEQUENCE [GENOMIC RNA]</scope>
</reference>
<reference key="3">
    <citation type="journal article" date="2002" name="Virology">
        <title>High genetic divergence and recombination in Arenaviruses from the Americas.</title>
        <authorList>
            <person name="Archer A.M."/>
            <person name="Rico-Hesse R."/>
        </authorList>
    </citation>
    <scope>NUCLEOTIDE SEQUENCE [GENOMIC RNA]</scope>
</reference>
<reference key="4">
    <citation type="journal article" date="2007" name="Nature">
        <title>Transferrin receptor 1 is a cellular receptor for New World haemorrhagic fever arenaviruses.</title>
        <authorList>
            <person name="Radoshitzky S.R."/>
            <person name="Abraham J."/>
            <person name="Spiropoulou C.F."/>
            <person name="Kuhn J.H."/>
            <person name="Nguyen D."/>
            <person name="Li W."/>
            <person name="Nagel J."/>
            <person name="Schmidt P.J."/>
            <person name="Nunberg J.H."/>
            <person name="Andrews N.C."/>
            <person name="Farzan M."/>
            <person name="Choe H."/>
        </authorList>
    </citation>
    <scope>FUNCTION</scope>
</reference>
<reference key="5">
    <citation type="journal article" date="2013" name="J. Virol.">
        <title>Crystal structure of Venezuelan hemorrhagic fever virus fusion glycoprotein reveals a class 1 postfusion architecture with extensive glycosylation.</title>
        <authorList>
            <person name="Parsy M.L."/>
            <person name="Harlos K."/>
            <person name="Huiskonen J.T."/>
            <person name="Bowden T.A."/>
        </authorList>
    </citation>
    <scope>X-RAY CRYSTALLOGRAPHY (4.14 ANGSTROMS) OF 292-418</scope>
    <scope>GLYCOSYLATION AT ASN-314; ASN-351; ASN-376 AND ASN-381</scope>
    <scope>DISULFIDE BOND</scope>
</reference>
<comment type="function">
    <molecule>Glycoprotein G1</molecule>
    <text evidence="2 3">Interacts with the host receptor (By similarity). Mediates virus attachment to host TFRC. This attachment induces virion internalization predominantly through clathrin-mediated endocytosis (PubMed:17287727).</text>
</comment>
<comment type="function">
    <molecule>Glycoprotein G2</molecule>
    <text evidence="2">Class I viral fusion protein that directs fusion of viral and host endosomal membranes, leading to delivery of the nucleocapsid into the cytoplasm. Membrane fusion is mediated by irreversible conformational changes induced upon acidification in the endosome.</text>
</comment>
<comment type="function">
    <text evidence="2">Stable signal peptide (SSP): cleaved and functions as a signal peptide. In addition, it is also retained as the third component of the GP complex. The SSP is required for efficient glycoprotein expression, post-translational maturation cleavage of GP1 and GP2, glycoprotein transport to the cell surface plasma membrane, formation of infectious virus particles, and acid pH-dependent glycoprotein-mediated cell fusion.</text>
</comment>
<comment type="subunit">
    <molecule>Glycoprotein G1</molecule>
    <text evidence="2">Homotetramer; disulfide-linked.</text>
</comment>
<comment type="subunit">
    <molecule>Glycoprotein G2</molecule>
    <text evidence="2">Homotetramer. GP2 homotetramers bind through ionic interactions with GP1 homotetramers to form the GP complex together with the stable signal peptide. The GP-C polyprotein interacts with the host protease MBTPS1/SKI-1 resulting in the polyprotein processing.</text>
</comment>
<comment type="subcellular location">
    <molecule>Glycoprotein G1</molecule>
    <subcellularLocation>
        <location evidence="2">Virion membrane</location>
        <topology evidence="2">Peripheral membrane protein</topology>
    </subcellularLocation>
    <subcellularLocation>
        <location evidence="2">Host endoplasmic reticulum membrane</location>
        <topology evidence="2">Peripheral membrane protein</topology>
    </subcellularLocation>
    <subcellularLocation>
        <location evidence="2">Host Golgi apparatus membrane</location>
        <topology evidence="2">Peripheral membrane protein</topology>
    </subcellularLocation>
    <subcellularLocation>
        <location evidence="2">Host cell membrane</location>
        <topology evidence="2">Peripheral membrane protein</topology>
    </subcellularLocation>
</comment>
<comment type="subcellular location">
    <molecule>Glycoprotein G2</molecule>
    <subcellularLocation>
        <location evidence="2">Virion membrane</location>
        <topology evidence="2">Single-pass membrane protein</topology>
    </subcellularLocation>
    <subcellularLocation>
        <location evidence="2">Host endoplasmic reticulum membrane</location>
        <topology evidence="2">Single-pass membrane protein</topology>
    </subcellularLocation>
    <subcellularLocation>
        <location evidence="2">Host Golgi apparatus membrane</location>
        <topology evidence="2">Single-pass membrane protein</topology>
    </subcellularLocation>
    <subcellularLocation>
        <location evidence="2">Host cell membrane</location>
        <topology evidence="2">Single-pass membrane protein</topology>
    </subcellularLocation>
    <text evidence="2">Binding to the stable signal peptide masks endogenous ER localization signals in the cytoplasmic domain of G2 to ensure that only the fully assembled, tripartite GP complex is transported for virion assembly.</text>
</comment>
<comment type="subcellular location">
    <molecule>Stable signal peptide</molecule>
    <subcellularLocation>
        <location evidence="2">Virion membrane</location>
        <topology evidence="2">Multi-pass membrane protein</topology>
    </subcellularLocation>
    <subcellularLocation>
        <location evidence="2">Host endoplasmic reticulum membrane</location>
        <topology evidence="2">Multi-pass membrane protein</topology>
    </subcellularLocation>
    <subcellularLocation>
        <location evidence="2">Host Golgi apparatus membrane</location>
        <topology evidence="2">Multi-pass membrane protein</topology>
    </subcellularLocation>
    <subcellularLocation>
        <location evidence="2">Host cell membrane</location>
        <topology evidence="2">Multi-pass membrane protein</topology>
    </subcellularLocation>
</comment>
<comment type="domain">
    <text evidence="2">The cytoplasmic domain of GP2 plays a role in ER location. It also contains a zinc-binding domain that allows SSP retention in the GPC complex by accepting a cysteine from SSP as the fourth ligand.</text>
</comment>
<comment type="PTM">
    <molecule>Pre-glycoprotein polyprotein GP complex</molecule>
    <text evidence="2">Specific enzymatic cleavages in vivo yield mature proteins. GP-C polyprotein is cleaved in the endoplasmic reticulum by the host protease MBTPS1. Only cleaved glycoprotein is incorporated into virions.</text>
</comment>
<comment type="PTM">
    <molecule>Stable signal peptide</molecule>
    <text evidence="2">The SSP remains stably associated with the GP complex following cleavage by signal peptidase and plays crucial roles in the trafficking of GP through the secretory pathway.</text>
</comment>
<comment type="PTM">
    <molecule>Stable signal peptide</molecule>
    <text evidence="2">Myristoylation is necessary for GP2-mediated fusion activity.</text>
</comment>
<comment type="similarity">
    <text evidence="2">Belongs to the arenaviridae GPC protein family.</text>
</comment>
<protein>
    <recommendedName>
        <fullName evidence="2">Pre-glycoprotein polyprotein GP complex</fullName>
        <shortName evidence="2">Pre-GP-C</shortName>
    </recommendedName>
    <component>
        <recommendedName>
            <fullName evidence="2">Stable signal peptide</fullName>
            <shortName evidence="2">SSP</shortName>
        </recommendedName>
    </component>
    <component>
        <recommendedName>
            <fullName evidence="2">Glycoprotein G1</fullName>
            <shortName evidence="2">GP1</shortName>
        </recommendedName>
    </component>
    <component>
        <recommendedName>
            <fullName evidence="2">Glycoprotein G2</fullName>
            <shortName evidence="2">GP2</shortName>
        </recommendedName>
    </component>
</protein>
<dbReference type="EMBL" id="AY129247">
    <property type="protein sequence ID" value="AAN05423.1"/>
    <property type="molecule type" value="Genomic_RNA"/>
</dbReference>
<dbReference type="EMBL" id="AF485258">
    <property type="protein sequence ID" value="AAN09938.1"/>
    <property type="molecule type" value="Genomic_RNA"/>
</dbReference>
<dbReference type="RefSeq" id="NP_899210.1">
    <property type="nucleotide sequence ID" value="NC_005077.1"/>
</dbReference>
<dbReference type="PDB" id="4C53">
    <property type="method" value="X-ray"/>
    <property type="resolution" value="4.14 A"/>
    <property type="chains" value="A/B/C=292-418"/>
</dbReference>
<dbReference type="PDBsum" id="4C53"/>
<dbReference type="SMR" id="Q8AYW1"/>
<dbReference type="GlyCosmos" id="Q8AYW1">
    <property type="glycosylation" value="10 sites, No reported glycans"/>
</dbReference>
<dbReference type="iPTMnet" id="Q8AYW1"/>
<dbReference type="KEGG" id="vg:2943169"/>
<dbReference type="OrthoDB" id="4838at10239"/>
<dbReference type="EvolutionaryTrace" id="Q8AYW1"/>
<dbReference type="Proteomes" id="UP000147629">
    <property type="component" value="Genome"/>
</dbReference>
<dbReference type="GO" id="GO:0044167">
    <property type="term" value="C:host cell endoplasmic reticulum membrane"/>
    <property type="evidence" value="ECO:0007669"/>
    <property type="project" value="UniProtKB-SubCell"/>
</dbReference>
<dbReference type="GO" id="GO:0044178">
    <property type="term" value="C:host cell Golgi membrane"/>
    <property type="evidence" value="ECO:0007669"/>
    <property type="project" value="UniProtKB-SubCell"/>
</dbReference>
<dbReference type="GO" id="GO:0020002">
    <property type="term" value="C:host cell plasma membrane"/>
    <property type="evidence" value="ECO:0007669"/>
    <property type="project" value="UniProtKB-SubCell"/>
</dbReference>
<dbReference type="GO" id="GO:0016020">
    <property type="term" value="C:membrane"/>
    <property type="evidence" value="ECO:0007669"/>
    <property type="project" value="UniProtKB-UniRule"/>
</dbReference>
<dbReference type="GO" id="GO:0019031">
    <property type="term" value="C:viral envelope"/>
    <property type="evidence" value="ECO:0007669"/>
    <property type="project" value="UniProtKB-UniRule"/>
</dbReference>
<dbReference type="GO" id="GO:0055036">
    <property type="term" value="C:virion membrane"/>
    <property type="evidence" value="ECO:0007669"/>
    <property type="project" value="UniProtKB-SubCell"/>
</dbReference>
<dbReference type="GO" id="GO:0046872">
    <property type="term" value="F:metal ion binding"/>
    <property type="evidence" value="ECO:0007669"/>
    <property type="project" value="UniProtKB-KW"/>
</dbReference>
<dbReference type="GO" id="GO:0039654">
    <property type="term" value="P:fusion of virus membrane with host endosome membrane"/>
    <property type="evidence" value="ECO:0007669"/>
    <property type="project" value="UniProtKB-UniRule"/>
</dbReference>
<dbReference type="GO" id="GO:0019065">
    <property type="term" value="P:receptor-mediated endocytosis of virus by host cell"/>
    <property type="evidence" value="ECO:0007669"/>
    <property type="project" value="UniProtKB-UniRule"/>
</dbReference>
<dbReference type="GO" id="GO:0019062">
    <property type="term" value="P:virion attachment to host cell"/>
    <property type="evidence" value="ECO:0007669"/>
    <property type="project" value="UniProtKB-UniRule"/>
</dbReference>
<dbReference type="Gene3D" id="6.10.140.1590">
    <property type="match status" value="1"/>
</dbReference>
<dbReference type="Gene3D" id="2.20.28.180">
    <property type="entry name" value="Arenavirus glycoprotein, zinc binding domain"/>
    <property type="match status" value="1"/>
</dbReference>
<dbReference type="HAMAP" id="MF_04084">
    <property type="entry name" value="ARENA_GPC"/>
    <property type="match status" value="1"/>
</dbReference>
<dbReference type="InterPro" id="IPR001535">
    <property type="entry name" value="Arena_glycoprot"/>
</dbReference>
<dbReference type="InterPro" id="IPR043015">
    <property type="entry name" value="Arena_glycoprot_zinc-bd"/>
</dbReference>
<dbReference type="Pfam" id="PF00798">
    <property type="entry name" value="Arena_glycoprot"/>
    <property type="match status" value="2"/>
</dbReference>
<dbReference type="PIRSF" id="PIRSF004028">
    <property type="entry name" value="GPC_ArenaV"/>
    <property type="match status" value="1"/>
</dbReference>
<keyword id="KW-0002">3D-structure</keyword>
<keyword id="KW-1015">Disulfide bond</keyword>
<keyword id="KW-1170">Fusion of virus membrane with host endosomal membrane</keyword>
<keyword id="KW-1168">Fusion of virus membrane with host membrane</keyword>
<keyword id="KW-0325">Glycoprotein</keyword>
<keyword id="KW-1032">Host cell membrane</keyword>
<keyword id="KW-1038">Host endoplasmic reticulum</keyword>
<keyword id="KW-1040">Host Golgi apparatus</keyword>
<keyword id="KW-1043">Host membrane</keyword>
<keyword id="KW-0945">Host-virus interaction</keyword>
<keyword id="KW-0449">Lipoprotein</keyword>
<keyword id="KW-0472">Membrane</keyword>
<keyword id="KW-0479">Metal-binding</keyword>
<keyword id="KW-0519">Myristate</keyword>
<keyword id="KW-0812">Transmembrane</keyword>
<keyword id="KW-1133">Transmembrane helix</keyword>
<keyword id="KW-1161">Viral attachment to host cell</keyword>
<keyword id="KW-0261">Viral envelope protein</keyword>
<keyword id="KW-1162">Viral penetration into host cytoplasm</keyword>
<keyword id="KW-0946">Virion</keyword>
<keyword id="KW-1164">Virus endocytosis by host</keyword>
<keyword id="KW-1160">Virus entry into host cell</keyword>
<keyword id="KW-0862">Zinc</keyword>